<comment type="function">
    <text evidence="1">Catalyzes the anti-1,4-elimination of the C-3 phosphate and the C-6 proR hydrogen from 5-enolpyruvylshikimate-3-phosphate (EPSP) to yield chorismate, which is the branch point compound that serves as the starting substrate for the three terminal pathways of aromatic amino acid biosynthesis. This reaction introduces a second double bond into the aromatic ring system.</text>
</comment>
<comment type="catalytic activity">
    <reaction evidence="1">
        <text>5-O-(1-carboxyvinyl)-3-phosphoshikimate = chorismate + phosphate</text>
        <dbReference type="Rhea" id="RHEA:21020"/>
        <dbReference type="ChEBI" id="CHEBI:29748"/>
        <dbReference type="ChEBI" id="CHEBI:43474"/>
        <dbReference type="ChEBI" id="CHEBI:57701"/>
        <dbReference type="EC" id="4.2.3.5"/>
    </reaction>
</comment>
<comment type="cofactor">
    <cofactor evidence="1">
        <name>FMNH2</name>
        <dbReference type="ChEBI" id="CHEBI:57618"/>
    </cofactor>
    <text evidence="1">Reduced FMN (FMNH(2)).</text>
</comment>
<comment type="pathway">
    <text evidence="1">Metabolic intermediate biosynthesis; chorismate biosynthesis; chorismate from D-erythrose 4-phosphate and phosphoenolpyruvate: step 7/7.</text>
</comment>
<comment type="subunit">
    <text evidence="1">Homotetramer.</text>
</comment>
<comment type="similarity">
    <text evidence="1">Belongs to the chorismate synthase family.</text>
</comment>
<comment type="sequence caution" evidence="2">
    <conflict type="erroneous initiation">
        <sequence resource="EMBL-CDS" id="CAI37197"/>
    </conflict>
    <text>Extended N-terminus.</text>
</comment>
<reference key="1">
    <citation type="journal article" date="2005" name="J. Bacteriol.">
        <title>Complete genome sequence and analysis of the multiresistant nosocomial pathogen Corynebacterium jeikeium K411, a lipid-requiring bacterium of the human skin flora.</title>
        <authorList>
            <person name="Tauch A."/>
            <person name="Kaiser O."/>
            <person name="Hain T."/>
            <person name="Goesmann A."/>
            <person name="Weisshaar B."/>
            <person name="Albersmeier A."/>
            <person name="Bekel T."/>
            <person name="Bischoff N."/>
            <person name="Brune I."/>
            <person name="Chakraborty T."/>
            <person name="Kalinowski J."/>
            <person name="Meyer F."/>
            <person name="Rupp O."/>
            <person name="Schneiker S."/>
            <person name="Viehoever P."/>
            <person name="Puehler A."/>
        </authorList>
    </citation>
    <scope>NUCLEOTIDE SEQUENCE [LARGE SCALE GENOMIC DNA]</scope>
    <source>
        <strain>K411</strain>
    </source>
</reference>
<evidence type="ECO:0000255" key="1">
    <source>
        <dbReference type="HAMAP-Rule" id="MF_00300"/>
    </source>
</evidence>
<evidence type="ECO:0000305" key="2"/>
<accession>Q4JVG0</accession>
<organism>
    <name type="scientific">Corynebacterium jeikeium (strain K411)</name>
    <dbReference type="NCBI Taxonomy" id="306537"/>
    <lineage>
        <taxon>Bacteria</taxon>
        <taxon>Bacillati</taxon>
        <taxon>Actinomycetota</taxon>
        <taxon>Actinomycetes</taxon>
        <taxon>Mycobacteriales</taxon>
        <taxon>Corynebacteriaceae</taxon>
        <taxon>Corynebacterium</taxon>
    </lineage>
</organism>
<proteinExistence type="inferred from homology"/>
<dbReference type="EC" id="4.2.3.5" evidence="1"/>
<dbReference type="EMBL" id="CR931997">
    <property type="protein sequence ID" value="CAI37197.1"/>
    <property type="status" value="ALT_INIT"/>
    <property type="molecule type" value="Genomic_DNA"/>
</dbReference>
<dbReference type="SMR" id="Q4JVG0"/>
<dbReference type="STRING" id="306537.jk1033"/>
<dbReference type="KEGG" id="cjk:jk1033"/>
<dbReference type="eggNOG" id="COG0082">
    <property type="taxonomic scope" value="Bacteria"/>
</dbReference>
<dbReference type="HOGENOM" id="CLU_034547_2_0_11"/>
<dbReference type="UniPathway" id="UPA00053">
    <property type="reaction ID" value="UER00090"/>
</dbReference>
<dbReference type="Proteomes" id="UP000000545">
    <property type="component" value="Chromosome"/>
</dbReference>
<dbReference type="GO" id="GO:0005829">
    <property type="term" value="C:cytosol"/>
    <property type="evidence" value="ECO:0007669"/>
    <property type="project" value="TreeGrafter"/>
</dbReference>
<dbReference type="GO" id="GO:0004107">
    <property type="term" value="F:chorismate synthase activity"/>
    <property type="evidence" value="ECO:0007669"/>
    <property type="project" value="UniProtKB-UniRule"/>
</dbReference>
<dbReference type="GO" id="GO:0010181">
    <property type="term" value="F:FMN binding"/>
    <property type="evidence" value="ECO:0007669"/>
    <property type="project" value="TreeGrafter"/>
</dbReference>
<dbReference type="GO" id="GO:0008652">
    <property type="term" value="P:amino acid biosynthetic process"/>
    <property type="evidence" value="ECO:0007669"/>
    <property type="project" value="UniProtKB-KW"/>
</dbReference>
<dbReference type="GO" id="GO:0009073">
    <property type="term" value="P:aromatic amino acid family biosynthetic process"/>
    <property type="evidence" value="ECO:0007669"/>
    <property type="project" value="UniProtKB-KW"/>
</dbReference>
<dbReference type="GO" id="GO:0009423">
    <property type="term" value="P:chorismate biosynthetic process"/>
    <property type="evidence" value="ECO:0007669"/>
    <property type="project" value="UniProtKB-UniRule"/>
</dbReference>
<dbReference type="CDD" id="cd07304">
    <property type="entry name" value="Chorismate_synthase"/>
    <property type="match status" value="1"/>
</dbReference>
<dbReference type="FunFam" id="3.60.150.10:FF:000002">
    <property type="entry name" value="Chorismate synthase"/>
    <property type="match status" value="1"/>
</dbReference>
<dbReference type="Gene3D" id="3.60.150.10">
    <property type="entry name" value="Chorismate synthase AroC"/>
    <property type="match status" value="1"/>
</dbReference>
<dbReference type="HAMAP" id="MF_00300">
    <property type="entry name" value="Chorismate_synth"/>
    <property type="match status" value="1"/>
</dbReference>
<dbReference type="InterPro" id="IPR000453">
    <property type="entry name" value="Chorismate_synth"/>
</dbReference>
<dbReference type="InterPro" id="IPR035904">
    <property type="entry name" value="Chorismate_synth_AroC_sf"/>
</dbReference>
<dbReference type="InterPro" id="IPR020541">
    <property type="entry name" value="Chorismate_synthase_CS"/>
</dbReference>
<dbReference type="NCBIfam" id="TIGR00033">
    <property type="entry name" value="aroC"/>
    <property type="match status" value="1"/>
</dbReference>
<dbReference type="NCBIfam" id="NF003793">
    <property type="entry name" value="PRK05382.1"/>
    <property type="match status" value="1"/>
</dbReference>
<dbReference type="PANTHER" id="PTHR21085">
    <property type="entry name" value="CHORISMATE SYNTHASE"/>
    <property type="match status" value="1"/>
</dbReference>
<dbReference type="PANTHER" id="PTHR21085:SF0">
    <property type="entry name" value="CHORISMATE SYNTHASE"/>
    <property type="match status" value="1"/>
</dbReference>
<dbReference type="Pfam" id="PF01264">
    <property type="entry name" value="Chorismate_synt"/>
    <property type="match status" value="1"/>
</dbReference>
<dbReference type="PIRSF" id="PIRSF001456">
    <property type="entry name" value="Chorismate_synth"/>
    <property type="match status" value="1"/>
</dbReference>
<dbReference type="SUPFAM" id="SSF103263">
    <property type="entry name" value="Chorismate synthase, AroC"/>
    <property type="match status" value="1"/>
</dbReference>
<dbReference type="PROSITE" id="PS00788">
    <property type="entry name" value="CHORISMATE_SYNTHASE_2"/>
    <property type="match status" value="1"/>
</dbReference>
<dbReference type="PROSITE" id="PS00789">
    <property type="entry name" value="CHORISMATE_SYNTHASE_3"/>
    <property type="match status" value="1"/>
</dbReference>
<feature type="chain" id="PRO_0000256287" description="Chorismate synthase">
    <location>
        <begin position="1"/>
        <end position="422"/>
    </location>
</feature>
<feature type="binding site" evidence="1">
    <location>
        <position position="43"/>
    </location>
    <ligand>
        <name>NADP(+)</name>
        <dbReference type="ChEBI" id="CHEBI:58349"/>
    </ligand>
</feature>
<feature type="binding site" evidence="1">
    <location>
        <position position="49"/>
    </location>
    <ligand>
        <name>NADP(+)</name>
        <dbReference type="ChEBI" id="CHEBI:58349"/>
    </ligand>
</feature>
<feature type="binding site" evidence="1">
    <location>
        <begin position="143"/>
        <end position="145"/>
    </location>
    <ligand>
        <name>FMN</name>
        <dbReference type="ChEBI" id="CHEBI:58210"/>
    </ligand>
</feature>
<feature type="binding site" evidence="1">
    <location>
        <begin position="264"/>
        <end position="265"/>
    </location>
    <ligand>
        <name>FMN</name>
        <dbReference type="ChEBI" id="CHEBI:58210"/>
    </ligand>
</feature>
<feature type="binding site" evidence="1">
    <location>
        <position position="309"/>
    </location>
    <ligand>
        <name>FMN</name>
        <dbReference type="ChEBI" id="CHEBI:58210"/>
    </ligand>
</feature>
<feature type="binding site" evidence="1">
    <location>
        <begin position="324"/>
        <end position="328"/>
    </location>
    <ligand>
        <name>FMN</name>
        <dbReference type="ChEBI" id="CHEBI:58210"/>
    </ligand>
</feature>
<feature type="binding site" evidence="1">
    <location>
        <position position="350"/>
    </location>
    <ligand>
        <name>FMN</name>
        <dbReference type="ChEBI" id="CHEBI:58210"/>
    </ligand>
</feature>
<gene>
    <name evidence="1" type="primary">aroC</name>
    <name type="ordered locus">jk1033</name>
</gene>
<keyword id="KW-0028">Amino-acid biosynthesis</keyword>
<keyword id="KW-0057">Aromatic amino acid biosynthesis</keyword>
<keyword id="KW-0274">FAD</keyword>
<keyword id="KW-0285">Flavoprotein</keyword>
<keyword id="KW-0288">FMN</keyword>
<keyword id="KW-0456">Lyase</keyword>
<keyword id="KW-0521">NADP</keyword>
<keyword id="KW-1185">Reference proteome</keyword>
<name>AROC_CORJK</name>
<protein>
    <recommendedName>
        <fullName evidence="1">Chorismate synthase</fullName>
        <shortName evidence="1">CS</shortName>
        <ecNumber evidence="1">4.2.3.5</ecNumber>
    </recommendedName>
    <alternativeName>
        <fullName evidence="1">5-enolpyruvylshikimate-3-phosphate phospholyase</fullName>
    </alternativeName>
</protein>
<sequence length="422" mass="44977">MLFMLRWTTAGESHGQALISMIENLPAGLSVSREDVSYQLARRRLGYGRGARMKFEADEVTFVGGVRHGKTLGSPVAVMIGNTEWPKWTTIMSADPIDESDPEVAKEMASGRGAKLTRPRPGHADFSGMVKYDHDEARPILERSSARETAARVAAGTFARALLREVLGVEVLSHVISIGRSEPYEGPSPEFSDLEGIDASPVRAFDSAVEESMIDEIKAAKKSGDTLGGIVEVVVKGLPIGLGSHVSGDERLDAQLAAALMGIQAIKGVEIGDGFEEARRRGSEAHDEMEAAANGGVHRLSNRAGGLEGGMTNGEELRVRAAMKPISTVPRALKTVDMATGEAATGIHQRSDVCAVPAAGVVAETMVALVLARAVLKKFGGDSVEETKRNVQSYLEYVDTRLDWSAEANDVADGEVADGEIR</sequence>